<accession>Q5BBA8</accession>
<accession>C8VMA6</accession>
<evidence type="ECO:0000250" key="1"/>
<evidence type="ECO:0000305" key="2"/>
<organism>
    <name type="scientific">Emericella nidulans (strain FGSC A4 / ATCC 38163 / CBS 112.46 / NRRL 194 / M139)</name>
    <name type="common">Aspergillus nidulans</name>
    <dbReference type="NCBI Taxonomy" id="227321"/>
    <lineage>
        <taxon>Eukaryota</taxon>
        <taxon>Fungi</taxon>
        <taxon>Dikarya</taxon>
        <taxon>Ascomycota</taxon>
        <taxon>Pezizomycotina</taxon>
        <taxon>Eurotiomycetes</taxon>
        <taxon>Eurotiomycetidae</taxon>
        <taxon>Eurotiales</taxon>
        <taxon>Aspergillaceae</taxon>
        <taxon>Aspergillus</taxon>
        <taxon>Aspergillus subgen. Nidulantes</taxon>
    </lineage>
</organism>
<protein>
    <recommendedName>
        <fullName>RNA polymerase II holoenzyme cyclin-like subunit</fullName>
    </recommendedName>
</protein>
<sequence>MAANYWASTQRKHWLFTRERLAEIRESFKEKDKASHTHFPLPDQRLLNIYFNQQLIKLGKRMSTRQQALATAQVYIKRYYTKNEIRNTNPYLVLTTAFYLACKMEECPQHIRFVVSEARALWPEFIVPDVSKVGECEFSLISEMQAQLIVHHPYRTLSELQPELSLTSDEVALAWSVINDHYLTDLSLLYPPHIIAVMAIIVAVVFKPSSQTAFHGSAAPIAGAMRDGGMNILAALSDKGGAGPPPRIQKLIAWLAESEVDIKAVIESTQELVSLYEVWEQYSEKNCKELLGRMIRSKSLDK</sequence>
<proteinExistence type="inferred from homology"/>
<reference key="1">
    <citation type="journal article" date="2005" name="Nature">
        <title>Sequencing of Aspergillus nidulans and comparative analysis with A. fumigatus and A. oryzae.</title>
        <authorList>
            <person name="Galagan J.E."/>
            <person name="Calvo S.E."/>
            <person name="Cuomo C."/>
            <person name="Ma L.-J."/>
            <person name="Wortman J.R."/>
            <person name="Batzoglou S."/>
            <person name="Lee S.-I."/>
            <person name="Bastuerkmen M."/>
            <person name="Spevak C.C."/>
            <person name="Clutterbuck J."/>
            <person name="Kapitonov V."/>
            <person name="Jurka J."/>
            <person name="Scazzocchio C."/>
            <person name="Farman M.L."/>
            <person name="Butler J."/>
            <person name="Purcell S."/>
            <person name="Harris S."/>
            <person name="Braus G.H."/>
            <person name="Draht O."/>
            <person name="Busch S."/>
            <person name="D'Enfert C."/>
            <person name="Bouchier C."/>
            <person name="Goldman G.H."/>
            <person name="Bell-Pedersen D."/>
            <person name="Griffiths-Jones S."/>
            <person name="Doonan J.H."/>
            <person name="Yu J."/>
            <person name="Vienken K."/>
            <person name="Pain A."/>
            <person name="Freitag M."/>
            <person name="Selker E.U."/>
            <person name="Archer D.B."/>
            <person name="Penalva M.A."/>
            <person name="Oakley B.R."/>
            <person name="Momany M."/>
            <person name="Tanaka T."/>
            <person name="Kumagai T."/>
            <person name="Asai K."/>
            <person name="Machida M."/>
            <person name="Nierman W.C."/>
            <person name="Denning D.W."/>
            <person name="Caddick M.X."/>
            <person name="Hynes M."/>
            <person name="Paoletti M."/>
            <person name="Fischer R."/>
            <person name="Miller B.L."/>
            <person name="Dyer P.S."/>
            <person name="Sachs M.S."/>
            <person name="Osmani S.A."/>
            <person name="Birren B.W."/>
        </authorList>
    </citation>
    <scope>NUCLEOTIDE SEQUENCE [LARGE SCALE GENOMIC DNA]</scope>
    <source>
        <strain>FGSC A4 / ATCC 38163 / CBS 112.46 / NRRL 194 / M139</strain>
    </source>
</reference>
<reference key="2">
    <citation type="journal article" date="2009" name="Fungal Genet. Biol.">
        <title>The 2008 update of the Aspergillus nidulans genome annotation: a community effort.</title>
        <authorList>
            <person name="Wortman J.R."/>
            <person name="Gilsenan J.M."/>
            <person name="Joardar V."/>
            <person name="Deegan J."/>
            <person name="Clutterbuck J."/>
            <person name="Andersen M.R."/>
            <person name="Archer D."/>
            <person name="Bencina M."/>
            <person name="Braus G."/>
            <person name="Coutinho P."/>
            <person name="von Dohren H."/>
            <person name="Doonan J."/>
            <person name="Driessen A.J."/>
            <person name="Durek P."/>
            <person name="Espeso E."/>
            <person name="Fekete E."/>
            <person name="Flipphi M."/>
            <person name="Estrada C.G."/>
            <person name="Geysens S."/>
            <person name="Goldman G."/>
            <person name="de Groot P.W."/>
            <person name="Hansen K."/>
            <person name="Harris S.D."/>
            <person name="Heinekamp T."/>
            <person name="Helmstaedt K."/>
            <person name="Henrissat B."/>
            <person name="Hofmann G."/>
            <person name="Homan T."/>
            <person name="Horio T."/>
            <person name="Horiuchi H."/>
            <person name="James S."/>
            <person name="Jones M."/>
            <person name="Karaffa L."/>
            <person name="Karanyi Z."/>
            <person name="Kato M."/>
            <person name="Keller N."/>
            <person name="Kelly D.E."/>
            <person name="Kiel J.A."/>
            <person name="Kim J.M."/>
            <person name="van der Klei I.J."/>
            <person name="Klis F.M."/>
            <person name="Kovalchuk A."/>
            <person name="Krasevec N."/>
            <person name="Kubicek C.P."/>
            <person name="Liu B."/>
            <person name="Maccabe A."/>
            <person name="Meyer V."/>
            <person name="Mirabito P."/>
            <person name="Miskei M."/>
            <person name="Mos M."/>
            <person name="Mullins J."/>
            <person name="Nelson D.R."/>
            <person name="Nielsen J."/>
            <person name="Oakley B.R."/>
            <person name="Osmani S.A."/>
            <person name="Pakula T."/>
            <person name="Paszewski A."/>
            <person name="Paulsen I."/>
            <person name="Pilsyk S."/>
            <person name="Pocsi I."/>
            <person name="Punt P.J."/>
            <person name="Ram A.F."/>
            <person name="Ren Q."/>
            <person name="Robellet X."/>
            <person name="Robson G."/>
            <person name="Seiboth B."/>
            <person name="van Solingen P."/>
            <person name="Specht T."/>
            <person name="Sun J."/>
            <person name="Taheri-Talesh N."/>
            <person name="Takeshita N."/>
            <person name="Ussery D."/>
            <person name="vanKuyk P.A."/>
            <person name="Visser H."/>
            <person name="van de Vondervoort P.J."/>
            <person name="de Vries R.P."/>
            <person name="Walton J."/>
            <person name="Xiang X."/>
            <person name="Xiong Y."/>
            <person name="Zeng A.P."/>
            <person name="Brandt B.W."/>
            <person name="Cornell M.J."/>
            <person name="van den Hondel C.A."/>
            <person name="Visser J."/>
            <person name="Oliver S.G."/>
            <person name="Turner G."/>
        </authorList>
    </citation>
    <scope>GENOME REANNOTATION</scope>
    <source>
        <strain>FGSC A4 / ATCC 38163 / CBS 112.46 / NRRL 194 / M139</strain>
    </source>
</reference>
<name>SSN8_EMENI</name>
<keyword id="KW-0010">Activator</keyword>
<keyword id="KW-0195">Cyclin</keyword>
<keyword id="KW-0539">Nucleus</keyword>
<keyword id="KW-1185">Reference proteome</keyword>
<keyword id="KW-0678">Repressor</keyword>
<keyword id="KW-0804">Transcription</keyword>
<keyword id="KW-0805">Transcription regulation</keyword>
<dbReference type="EMBL" id="AACD01000034">
    <property type="protein sequence ID" value="EAA64216.1"/>
    <property type="status" value="ALT_SEQ"/>
    <property type="molecule type" value="Genomic_DNA"/>
</dbReference>
<dbReference type="EMBL" id="BN001307">
    <property type="protein sequence ID" value="CBF86313.1"/>
    <property type="status" value="ALT_SEQ"/>
    <property type="molecule type" value="Genomic_DNA"/>
</dbReference>
<dbReference type="RefSeq" id="XP_659776.1">
    <property type="nucleotide sequence ID" value="XM_654684.1"/>
</dbReference>
<dbReference type="SMR" id="Q5BBA8"/>
<dbReference type="FunCoup" id="Q5BBA8">
    <property type="interactions" value="906"/>
</dbReference>
<dbReference type="STRING" id="227321.Q5BBA8"/>
<dbReference type="KEGG" id="ani:ANIA_02172"/>
<dbReference type="VEuPathDB" id="FungiDB:AN2172"/>
<dbReference type="eggNOG" id="KOG0794">
    <property type="taxonomic scope" value="Eukaryota"/>
</dbReference>
<dbReference type="HOGENOM" id="CLU_034754_2_0_1"/>
<dbReference type="InParanoid" id="Q5BBA8"/>
<dbReference type="OrthoDB" id="10266018at2759"/>
<dbReference type="Proteomes" id="UP000000560">
    <property type="component" value="Chromosome VII"/>
</dbReference>
<dbReference type="GO" id="GO:0016592">
    <property type="term" value="C:mediator complex"/>
    <property type="evidence" value="ECO:0000318"/>
    <property type="project" value="GO_Central"/>
</dbReference>
<dbReference type="GO" id="GO:0005634">
    <property type="term" value="C:nucleus"/>
    <property type="evidence" value="ECO:0000318"/>
    <property type="project" value="GO_Central"/>
</dbReference>
<dbReference type="GO" id="GO:0016538">
    <property type="term" value="F:cyclin-dependent protein serine/threonine kinase regulator activity"/>
    <property type="evidence" value="ECO:0000318"/>
    <property type="project" value="GO_Central"/>
</dbReference>
<dbReference type="GO" id="GO:0045944">
    <property type="term" value="P:positive regulation of transcription by RNA polymerase II"/>
    <property type="evidence" value="ECO:0000318"/>
    <property type="project" value="GO_Central"/>
</dbReference>
<dbReference type="CDD" id="cd20513">
    <property type="entry name" value="CYCLIN_CCNC_rpt1"/>
    <property type="match status" value="1"/>
</dbReference>
<dbReference type="FunFam" id="1.10.472.10:FF:000092">
    <property type="entry name" value="RNA polymerase II holoenzyme cyclin-like subunit"/>
    <property type="match status" value="1"/>
</dbReference>
<dbReference type="Gene3D" id="1.10.472.10">
    <property type="entry name" value="Cyclin-like"/>
    <property type="match status" value="2"/>
</dbReference>
<dbReference type="InterPro" id="IPR013763">
    <property type="entry name" value="Cyclin-like_dom"/>
</dbReference>
<dbReference type="InterPro" id="IPR036915">
    <property type="entry name" value="Cyclin-like_sf"/>
</dbReference>
<dbReference type="InterPro" id="IPR043198">
    <property type="entry name" value="Cyclin/Ssn8"/>
</dbReference>
<dbReference type="InterPro" id="IPR006671">
    <property type="entry name" value="Cyclin_N"/>
</dbReference>
<dbReference type="PANTHER" id="PTHR10026">
    <property type="entry name" value="CYCLIN"/>
    <property type="match status" value="1"/>
</dbReference>
<dbReference type="Pfam" id="PF00134">
    <property type="entry name" value="Cyclin_N"/>
    <property type="match status" value="1"/>
</dbReference>
<dbReference type="PIRSF" id="PIRSF028758">
    <property type="entry name" value="Cyclin, C/H/G types"/>
    <property type="match status" value="1"/>
</dbReference>
<dbReference type="SMART" id="SM00385">
    <property type="entry name" value="CYCLIN"/>
    <property type="match status" value="1"/>
</dbReference>
<dbReference type="SUPFAM" id="SSF47954">
    <property type="entry name" value="Cyclin-like"/>
    <property type="match status" value="2"/>
</dbReference>
<gene>
    <name type="primary">ssn8</name>
    <name type="ORF">AN2172</name>
</gene>
<feature type="chain" id="PRO_0000314275" description="RNA polymerase II holoenzyme cyclin-like subunit">
    <location>
        <begin position="1"/>
        <end position="302"/>
    </location>
</feature>
<feature type="domain" description="Cyclin N-terminal">
    <location>
        <begin position="53"/>
        <end position="142"/>
    </location>
</feature>
<comment type="function">
    <text evidence="1">Component of the srb8-11 complex. The srb8-11 complex is a regulatory module of the Mediator complex which is itself involved in regulation of basal and activated RNA polymerase II-dependent transcription. The srb8-11 complex may be involved in the transcriptional repression of a subset of genes regulated by Mediator. It may inhibit the association of the Mediator complex with RNA polymerase II to form the holoenzyme complex. The srb8-11 complex phosphorylates the C-terminal domain (CTD) of the largest subunit of RNA polymerase II (By similarity).</text>
</comment>
<comment type="subunit">
    <text evidence="1">Component of the srb8-11 complex, a regulatory module of the Mediator complex.</text>
</comment>
<comment type="subcellular location">
    <subcellularLocation>
        <location evidence="2">Nucleus</location>
    </subcellularLocation>
</comment>
<comment type="similarity">
    <text evidence="2">Belongs to the cyclin family. Cyclin C subfamily.</text>
</comment>
<comment type="sequence caution" evidence="2">
    <conflict type="erroneous gene model prediction">
        <sequence resource="EMBL-CDS" id="CBF86313"/>
    </conflict>
</comment>
<comment type="sequence caution" evidence="2">
    <conflict type="erroneous gene model prediction">
        <sequence resource="EMBL-CDS" id="EAA64216"/>
    </conflict>
</comment>